<comment type="function">
    <text evidence="1">Specifically acetylates 'Lys-40' in alpha-tubulin on the lumenal side of microtubules. Promotes microtubule destabilization and accelerates microtubule dynamics; this activity may be independent of acetylation activity. Acetylates alpha-tubulin with a slow enzymatic rate, due to a catalytic site that is not optimized for acetyl transfer. Enters the microtubule through each end and diffuses quickly throughout the lumen of microtubules. Acetylates only long/old microtubules because of its slow acetylation rate since it does not have time to act on dynamically unstable microtubules before the enzyme is released.</text>
</comment>
<comment type="catalytic activity">
    <reaction evidence="1">
        <text>L-lysyl-[alpha-tubulin] + acetyl-CoA = N(6)-acetyl-L-lysyl-[alpha-tubulin] + CoA + H(+)</text>
        <dbReference type="Rhea" id="RHEA:15277"/>
        <dbReference type="Rhea" id="RHEA-COMP:11278"/>
        <dbReference type="Rhea" id="RHEA-COMP:11279"/>
        <dbReference type="ChEBI" id="CHEBI:15378"/>
        <dbReference type="ChEBI" id="CHEBI:29969"/>
        <dbReference type="ChEBI" id="CHEBI:57287"/>
        <dbReference type="ChEBI" id="CHEBI:57288"/>
        <dbReference type="ChEBI" id="CHEBI:61930"/>
        <dbReference type="EC" id="2.3.1.108"/>
    </reaction>
</comment>
<comment type="alternative products">
    <event type="alternative splicing"/>
    <isoform>
        <id>Q16Y34-1</id>
        <name>B</name>
        <sequence type="displayed"/>
    </isoform>
    <isoform>
        <id>Q16Y34-2</id>
        <name>A</name>
        <sequence type="described" ref="VSP_040230 VSP_040231"/>
    </isoform>
</comment>
<comment type="similarity">
    <text evidence="1">Belongs to the acetyltransferase ATAT1 family.</text>
</comment>
<reference key="1">
    <citation type="journal article" date="2007" name="Science">
        <title>Genome sequence of Aedes aegypti, a major arbovirus vector.</title>
        <authorList>
            <person name="Nene V."/>
            <person name="Wortman J.R."/>
            <person name="Lawson D."/>
            <person name="Haas B.J."/>
            <person name="Kodira C.D."/>
            <person name="Tu Z.J."/>
            <person name="Loftus B.J."/>
            <person name="Xi Z."/>
            <person name="Megy K."/>
            <person name="Grabherr M."/>
            <person name="Ren Q."/>
            <person name="Zdobnov E.M."/>
            <person name="Lobo N.F."/>
            <person name="Campbell K.S."/>
            <person name="Brown S.E."/>
            <person name="Bonaldo M.F."/>
            <person name="Zhu J."/>
            <person name="Sinkins S.P."/>
            <person name="Hogenkamp D.G."/>
            <person name="Amedeo P."/>
            <person name="Arensburger P."/>
            <person name="Atkinson P.W."/>
            <person name="Bidwell S.L."/>
            <person name="Biedler J."/>
            <person name="Birney E."/>
            <person name="Bruggner R.V."/>
            <person name="Costas J."/>
            <person name="Coy M.R."/>
            <person name="Crabtree J."/>
            <person name="Crawford M."/>
            <person name="DeBruyn B."/>
            <person name="DeCaprio D."/>
            <person name="Eiglmeier K."/>
            <person name="Eisenstadt E."/>
            <person name="El-Dorry H."/>
            <person name="Gelbart W.M."/>
            <person name="Gomes S.L."/>
            <person name="Hammond M."/>
            <person name="Hannick L.I."/>
            <person name="Hogan J.R."/>
            <person name="Holmes M.H."/>
            <person name="Jaffe D."/>
            <person name="Johnston S.J."/>
            <person name="Kennedy R.C."/>
            <person name="Koo H."/>
            <person name="Kravitz S."/>
            <person name="Kriventseva E.V."/>
            <person name="Kulp D."/>
            <person name="Labutti K."/>
            <person name="Lee E."/>
            <person name="Li S."/>
            <person name="Lovin D.D."/>
            <person name="Mao C."/>
            <person name="Mauceli E."/>
            <person name="Menck C.F."/>
            <person name="Miller J.R."/>
            <person name="Montgomery P."/>
            <person name="Mori A."/>
            <person name="Nascimento A.L."/>
            <person name="Naveira H.F."/>
            <person name="Nusbaum C."/>
            <person name="O'Leary S.B."/>
            <person name="Orvis J."/>
            <person name="Pertea M."/>
            <person name="Quesneville H."/>
            <person name="Reidenbach K.R."/>
            <person name="Rogers Y.-H.C."/>
            <person name="Roth C.W."/>
            <person name="Schneider J.R."/>
            <person name="Schatz M."/>
            <person name="Shumway M."/>
            <person name="Stanke M."/>
            <person name="Stinson E.O."/>
            <person name="Tubio J.M.C."/>
            <person name="Vanzee J.P."/>
            <person name="Verjovski-Almeida S."/>
            <person name="Werner D."/>
            <person name="White O.R."/>
            <person name="Wyder S."/>
            <person name="Zeng Q."/>
            <person name="Zhao Q."/>
            <person name="Zhao Y."/>
            <person name="Hill C.A."/>
            <person name="Raikhel A.S."/>
            <person name="Soares M.B."/>
            <person name="Knudson D.L."/>
            <person name="Lee N.H."/>
            <person name="Galagan J."/>
            <person name="Salzberg S.L."/>
            <person name="Paulsen I.T."/>
            <person name="Dimopoulos G."/>
            <person name="Collins F.H."/>
            <person name="Bruce B."/>
            <person name="Fraser-Liggett C.M."/>
            <person name="Severson D.W."/>
        </authorList>
    </citation>
    <scope>NUCLEOTIDE SEQUENCE [LARGE SCALE GENOMIC DNA]</scope>
    <source>
        <strain>LVPib12</strain>
    </source>
</reference>
<protein>
    <recommendedName>
        <fullName evidence="1">Alpha-tubulin N-acetyltransferase</fullName>
        <shortName evidence="1">Alpha-TAT</shortName>
        <shortName evidence="1">TAT</shortName>
        <ecNumber evidence="1">2.3.1.108</ecNumber>
    </recommendedName>
    <alternativeName>
        <fullName evidence="1">Acetyltransferase mec-17 homolog</fullName>
    </alternativeName>
</protein>
<proteinExistence type="inferred from homology"/>
<evidence type="ECO:0000255" key="1">
    <source>
        <dbReference type="HAMAP-Rule" id="MF_03130"/>
    </source>
</evidence>
<evidence type="ECO:0000256" key="2">
    <source>
        <dbReference type="SAM" id="MobiDB-lite"/>
    </source>
</evidence>
<evidence type="ECO:0000305" key="3"/>
<organism>
    <name type="scientific">Aedes aegypti</name>
    <name type="common">Yellowfever mosquito</name>
    <name type="synonym">Culex aegypti</name>
    <dbReference type="NCBI Taxonomy" id="7159"/>
    <lineage>
        <taxon>Eukaryota</taxon>
        <taxon>Metazoa</taxon>
        <taxon>Ecdysozoa</taxon>
        <taxon>Arthropoda</taxon>
        <taxon>Hexapoda</taxon>
        <taxon>Insecta</taxon>
        <taxon>Pterygota</taxon>
        <taxon>Neoptera</taxon>
        <taxon>Endopterygota</taxon>
        <taxon>Diptera</taxon>
        <taxon>Nematocera</taxon>
        <taxon>Culicoidea</taxon>
        <taxon>Culicidae</taxon>
        <taxon>Culicinae</taxon>
        <taxon>Aedini</taxon>
        <taxon>Aedes</taxon>
        <taxon>Stegomyia</taxon>
    </lineage>
</organism>
<dbReference type="EC" id="2.3.1.108" evidence="1"/>
<dbReference type="EMBL" id="CH477526">
    <property type="protein sequence ID" value="EAT39526.1"/>
    <property type="molecule type" value="Genomic_DNA"/>
</dbReference>
<dbReference type="EMBL" id="CH477526">
    <property type="protein sequence ID" value="EAT39527.1"/>
    <property type="molecule type" value="Genomic_DNA"/>
</dbReference>
<dbReference type="EMBL" id="CH477526">
    <property type="protein sequence ID" value="EAT39525.1"/>
    <property type="molecule type" value="Genomic_DNA"/>
</dbReference>
<dbReference type="RefSeq" id="XP_001653412.1">
    <property type="nucleotide sequence ID" value="XM_001653362.1"/>
</dbReference>
<dbReference type="RefSeq" id="XP_001653413.1">
    <property type="nucleotide sequence ID" value="XM_001653363.1"/>
</dbReference>
<dbReference type="RefSeq" id="XP_001653414.1">
    <property type="nucleotide sequence ID" value="XM_001653364.1"/>
</dbReference>
<dbReference type="SMR" id="Q16Y34"/>
<dbReference type="FunCoup" id="Q16Y34">
    <property type="interactions" value="32"/>
</dbReference>
<dbReference type="STRING" id="7159.Q16Y34"/>
<dbReference type="PaxDb" id="7159-AAEL008679-PB"/>
<dbReference type="GeneID" id="5570947"/>
<dbReference type="KEGG" id="aag:5570947"/>
<dbReference type="VEuPathDB" id="VectorBase:AAEL008679"/>
<dbReference type="eggNOG" id="KOG4601">
    <property type="taxonomic scope" value="Eukaryota"/>
</dbReference>
<dbReference type="InParanoid" id="Q16Y34"/>
<dbReference type="OMA" id="DTDHTIY"/>
<dbReference type="OrthoDB" id="447510at2759"/>
<dbReference type="PhylomeDB" id="Q16Y34"/>
<dbReference type="Proteomes" id="UP000008820">
    <property type="component" value="Unassembled WGS sequence"/>
</dbReference>
<dbReference type="Proteomes" id="UP000682892">
    <property type="component" value="Unassembled WGS sequence"/>
</dbReference>
<dbReference type="GO" id="GO:0005874">
    <property type="term" value="C:microtubule"/>
    <property type="evidence" value="ECO:0007669"/>
    <property type="project" value="InterPro"/>
</dbReference>
<dbReference type="GO" id="GO:0019799">
    <property type="term" value="F:tubulin N-acetyltransferase activity"/>
    <property type="evidence" value="ECO:0007669"/>
    <property type="project" value="UniProtKB-UniRule"/>
</dbReference>
<dbReference type="GO" id="GO:0048666">
    <property type="term" value="P:neuron development"/>
    <property type="evidence" value="ECO:0007669"/>
    <property type="project" value="UniProtKB-UniRule"/>
</dbReference>
<dbReference type="GO" id="GO:0070507">
    <property type="term" value="P:regulation of microtubule cytoskeleton organization"/>
    <property type="evidence" value="ECO:0007669"/>
    <property type="project" value="UniProtKB-UniRule"/>
</dbReference>
<dbReference type="CDD" id="cd04301">
    <property type="entry name" value="NAT_SF"/>
    <property type="match status" value="1"/>
</dbReference>
<dbReference type="FunFam" id="3.40.630.30:FF:000060">
    <property type="entry name" value="Alpha-tubulin N-acetyltransferase 1"/>
    <property type="match status" value="1"/>
</dbReference>
<dbReference type="Gene3D" id="3.40.630.30">
    <property type="match status" value="1"/>
</dbReference>
<dbReference type="HAMAP" id="MF_03130">
    <property type="entry name" value="mec17"/>
    <property type="match status" value="1"/>
</dbReference>
<dbReference type="InterPro" id="IPR016181">
    <property type="entry name" value="Acyl_CoA_acyltransferase"/>
</dbReference>
<dbReference type="InterPro" id="IPR038746">
    <property type="entry name" value="Atat"/>
</dbReference>
<dbReference type="InterPro" id="IPR007965">
    <property type="entry name" value="GNAT_ATAT"/>
</dbReference>
<dbReference type="PANTHER" id="PTHR12327">
    <property type="entry name" value="ALPHA-TUBULIN N-ACETYLTRANSFERASE 1"/>
    <property type="match status" value="1"/>
</dbReference>
<dbReference type="PANTHER" id="PTHR12327:SF0">
    <property type="entry name" value="ALPHA-TUBULIN N-ACETYLTRANSFERASE 1"/>
    <property type="match status" value="1"/>
</dbReference>
<dbReference type="Pfam" id="PF05301">
    <property type="entry name" value="Acetyltransf_16"/>
    <property type="match status" value="1"/>
</dbReference>
<dbReference type="SUPFAM" id="SSF55729">
    <property type="entry name" value="Acyl-CoA N-acyltransferases (Nat)"/>
    <property type="match status" value="1"/>
</dbReference>
<dbReference type="PROSITE" id="PS51730">
    <property type="entry name" value="GNAT_ATAT"/>
    <property type="match status" value="1"/>
</dbReference>
<gene>
    <name type="ORF">AAEL008679</name>
</gene>
<name>ATAT_AEDAE</name>
<sequence length="272" mass="30850">MEFRFNCHPLFRQRIVRINNSLLPTGFVAQHRREALDATAQISEIINFVGQLSAQAQGLSNPVTTSQKLRNSDHHIYLMFESNQKHGLVVGILKVGRKSLYVFDQNGETVNVTAPCVLDFYVHESRQRGGLGRELFDHMLKEENIHPEEMAIDRPSEKLLGFLQKHYGLYKKIPQMNNFVVYEGFFANKHHASDIDGRRMHITASPNTNLFGPTFTTVGEQRRSSSQTRQQVVSPPVVQQPPVGRYAAKRPSCSMAQIIHNSPTTVSTEPNR</sequence>
<accession>Q16Y34</accession>
<accession>Q16Y33</accession>
<feature type="chain" id="PRO_0000402070" description="Alpha-tubulin N-acetyltransferase">
    <location>
        <begin position="1"/>
        <end position="272"/>
    </location>
</feature>
<feature type="domain" description="N-acetyltransferase" evidence="1">
    <location>
        <begin position="1"/>
        <end position="186"/>
    </location>
</feature>
<feature type="region of interest" description="Disordered" evidence="2">
    <location>
        <begin position="216"/>
        <end position="244"/>
    </location>
</feature>
<feature type="compositionally biased region" description="Low complexity" evidence="2">
    <location>
        <begin position="224"/>
        <end position="244"/>
    </location>
</feature>
<feature type="binding site" evidence="1">
    <location>
        <begin position="120"/>
        <end position="133"/>
    </location>
    <ligand>
        <name>acetyl-CoA</name>
        <dbReference type="ChEBI" id="CHEBI:57288"/>
    </ligand>
</feature>
<feature type="binding site" evidence="1">
    <location>
        <begin position="156"/>
        <end position="165"/>
    </location>
    <ligand>
        <name>acetyl-CoA</name>
        <dbReference type="ChEBI" id="CHEBI:57288"/>
    </ligand>
</feature>
<feature type="site" description="Crucial for catalytic activity" evidence="1">
    <location>
        <position position="57"/>
    </location>
</feature>
<feature type="splice variant" id="VSP_040230" description="In isoform A." evidence="3">
    <original>S</original>
    <variation>R</variation>
    <location>
        <position position="205"/>
    </location>
</feature>
<feature type="splice variant" id="VSP_040231" description="In isoform A." evidence="3">
    <location>
        <begin position="206"/>
        <end position="272"/>
    </location>
</feature>
<keyword id="KW-0012">Acyltransferase</keyword>
<keyword id="KW-0025">Alternative splicing</keyword>
<keyword id="KW-1185">Reference proteome</keyword>
<keyword id="KW-0808">Transferase</keyword>